<protein>
    <recommendedName>
        <fullName evidence="1">Deoxyguanosinetriphosphate triphosphohydrolase-like protein</fullName>
    </recommendedName>
</protein>
<organism>
    <name type="scientific">Corynebacterium glutamicum (strain ATCC 13032 / DSM 20300 / JCM 1318 / BCRC 11384 / CCUG 27702 / LMG 3730 / NBRC 12168 / NCIMB 10025 / NRRL B-2784 / 534)</name>
    <dbReference type="NCBI Taxonomy" id="196627"/>
    <lineage>
        <taxon>Bacteria</taxon>
        <taxon>Bacillati</taxon>
        <taxon>Actinomycetota</taxon>
        <taxon>Actinomycetes</taxon>
        <taxon>Mycobacteriales</taxon>
        <taxon>Corynebacteriaceae</taxon>
        <taxon>Corynebacterium</taxon>
    </lineage>
</organism>
<comment type="similarity">
    <text evidence="1">Belongs to the dGTPase family. Type 2 subfamily.</text>
</comment>
<name>DGTL1_CORGL</name>
<accession>Q8NND1</accession>
<gene>
    <name type="primary">dgt</name>
    <name type="ordered locus">Cgl2273</name>
    <name type="ordered locus">cg2494</name>
</gene>
<keyword id="KW-0378">Hydrolase</keyword>
<keyword id="KW-1185">Reference proteome</keyword>
<sequence>MYPYSDADAFRRQPERAKSSQLRTSAVDTRSAFARDRARVLHSAALRRLADKTQVVGPNDGDTPRTRLTHSLEVAQIARGIGAGLDLDPDLCDLAGLCHDIGHPPYGHNGENALNEVAAACGGFEGNAQTLRILTRLEPKIVSDEGESFGLNLSRAALDAACKYPWAKTNADGSVNKKYSAYDEDAEILAWIRQGHEDLRPPIEAQVMDFSDDIAYSVHDVEDGIVSGRIDLKVLWDLVELAALADKGAAAFGGSPAELIEGAASLRELPVVAAAADFDFSLRSYAALKAMTSELVGRYVGSTIESTKKTHAGIDVGRMHGDLIIPETAASEVKLLKTLAVLYVMDDPGHLARQNRQRDRIFRVFDYLVLGAPGSLDPMYRQWFIEADSESEQIRVIVDQIASMTESRLERLARNAADISGFLG</sequence>
<feature type="chain" id="PRO_0000205302" description="Deoxyguanosinetriphosphate triphosphohydrolase-like protein">
    <location>
        <begin position="1"/>
        <end position="424"/>
    </location>
</feature>
<feature type="domain" description="HD" evidence="2">
    <location>
        <begin position="67"/>
        <end position="217"/>
    </location>
</feature>
<feature type="region of interest" description="Disordered" evidence="3">
    <location>
        <begin position="1"/>
        <end position="27"/>
    </location>
</feature>
<feature type="compositionally biased region" description="Basic and acidic residues" evidence="3">
    <location>
        <begin position="8"/>
        <end position="18"/>
    </location>
</feature>
<proteinExistence type="inferred from homology"/>
<reference key="1">
    <citation type="journal article" date="2003" name="Appl. Microbiol. Biotechnol.">
        <title>The Corynebacterium glutamicum genome: features and impacts on biotechnological processes.</title>
        <authorList>
            <person name="Ikeda M."/>
            <person name="Nakagawa S."/>
        </authorList>
    </citation>
    <scope>NUCLEOTIDE SEQUENCE [LARGE SCALE GENOMIC DNA]</scope>
    <source>
        <strain>ATCC 13032 / DSM 20300 / JCM 1318 / BCRC 11384 / CCUG 27702 / LMG 3730 / NBRC 12168 / NCIMB 10025 / NRRL B-2784 / 534</strain>
    </source>
</reference>
<reference key="2">
    <citation type="journal article" date="2003" name="J. Biotechnol.">
        <title>The complete Corynebacterium glutamicum ATCC 13032 genome sequence and its impact on the production of L-aspartate-derived amino acids and vitamins.</title>
        <authorList>
            <person name="Kalinowski J."/>
            <person name="Bathe B."/>
            <person name="Bartels D."/>
            <person name="Bischoff N."/>
            <person name="Bott M."/>
            <person name="Burkovski A."/>
            <person name="Dusch N."/>
            <person name="Eggeling L."/>
            <person name="Eikmanns B.J."/>
            <person name="Gaigalat L."/>
            <person name="Goesmann A."/>
            <person name="Hartmann M."/>
            <person name="Huthmacher K."/>
            <person name="Kraemer R."/>
            <person name="Linke B."/>
            <person name="McHardy A.C."/>
            <person name="Meyer F."/>
            <person name="Moeckel B."/>
            <person name="Pfefferle W."/>
            <person name="Puehler A."/>
            <person name="Rey D.A."/>
            <person name="Rueckert C."/>
            <person name="Rupp O."/>
            <person name="Sahm H."/>
            <person name="Wendisch V.F."/>
            <person name="Wiegraebe I."/>
            <person name="Tauch A."/>
        </authorList>
    </citation>
    <scope>NUCLEOTIDE SEQUENCE [LARGE SCALE GENOMIC DNA]</scope>
    <source>
        <strain>ATCC 13032 / DSM 20300 / JCM 1318 / BCRC 11384 / CCUG 27702 / LMG 3730 / NBRC 12168 / NCIMB 10025 / NRRL B-2784 / 534</strain>
    </source>
</reference>
<evidence type="ECO:0000255" key="1">
    <source>
        <dbReference type="HAMAP-Rule" id="MF_01212"/>
    </source>
</evidence>
<evidence type="ECO:0000255" key="2">
    <source>
        <dbReference type="PROSITE-ProRule" id="PRU01175"/>
    </source>
</evidence>
<evidence type="ECO:0000256" key="3">
    <source>
        <dbReference type="SAM" id="MobiDB-lite"/>
    </source>
</evidence>
<dbReference type="EMBL" id="BA000036">
    <property type="protein sequence ID" value="BAB99666.1"/>
    <property type="molecule type" value="Genomic_DNA"/>
</dbReference>
<dbReference type="EMBL" id="BX927154">
    <property type="protein sequence ID" value="CAF20615.1"/>
    <property type="molecule type" value="Genomic_DNA"/>
</dbReference>
<dbReference type="RefSeq" id="NP_601473.1">
    <property type="nucleotide sequence ID" value="NC_003450.3"/>
</dbReference>
<dbReference type="RefSeq" id="WP_011015002.1">
    <property type="nucleotide sequence ID" value="NC_006958.1"/>
</dbReference>
<dbReference type="SMR" id="Q8NND1"/>
<dbReference type="STRING" id="196627.cg2494"/>
<dbReference type="KEGG" id="cgb:cg2494"/>
<dbReference type="KEGG" id="cgl:Cgl2273"/>
<dbReference type="PATRIC" id="fig|196627.13.peg.2206"/>
<dbReference type="eggNOG" id="COG0232">
    <property type="taxonomic scope" value="Bacteria"/>
</dbReference>
<dbReference type="HOGENOM" id="CLU_028163_0_1_11"/>
<dbReference type="OrthoDB" id="9803619at2"/>
<dbReference type="BioCyc" id="CORYNE:G18NG-11870-MONOMER"/>
<dbReference type="Proteomes" id="UP000000582">
    <property type="component" value="Chromosome"/>
</dbReference>
<dbReference type="Proteomes" id="UP000001009">
    <property type="component" value="Chromosome"/>
</dbReference>
<dbReference type="GO" id="GO:0008832">
    <property type="term" value="F:dGTPase activity"/>
    <property type="evidence" value="ECO:0007669"/>
    <property type="project" value="TreeGrafter"/>
</dbReference>
<dbReference type="GO" id="GO:0006203">
    <property type="term" value="P:dGTP catabolic process"/>
    <property type="evidence" value="ECO:0007669"/>
    <property type="project" value="TreeGrafter"/>
</dbReference>
<dbReference type="CDD" id="cd00077">
    <property type="entry name" value="HDc"/>
    <property type="match status" value="1"/>
</dbReference>
<dbReference type="Gene3D" id="1.10.3210.10">
    <property type="entry name" value="Hypothetical protein af1432"/>
    <property type="match status" value="1"/>
</dbReference>
<dbReference type="HAMAP" id="MF_01212">
    <property type="entry name" value="dGTPase_type2"/>
    <property type="match status" value="1"/>
</dbReference>
<dbReference type="InterPro" id="IPR006261">
    <property type="entry name" value="dGTPase"/>
</dbReference>
<dbReference type="InterPro" id="IPR050135">
    <property type="entry name" value="dGTPase-like"/>
</dbReference>
<dbReference type="InterPro" id="IPR023023">
    <property type="entry name" value="dNTPase_2"/>
</dbReference>
<dbReference type="InterPro" id="IPR003607">
    <property type="entry name" value="HD/PDEase_dom"/>
</dbReference>
<dbReference type="InterPro" id="IPR006674">
    <property type="entry name" value="HD_domain"/>
</dbReference>
<dbReference type="InterPro" id="IPR026875">
    <property type="entry name" value="PHydrolase_assoc_dom"/>
</dbReference>
<dbReference type="NCBIfam" id="TIGR01353">
    <property type="entry name" value="dGTP_triPase"/>
    <property type="match status" value="1"/>
</dbReference>
<dbReference type="NCBIfam" id="NF002829">
    <property type="entry name" value="PRK03007.1"/>
    <property type="match status" value="1"/>
</dbReference>
<dbReference type="PANTHER" id="PTHR11373:SF32">
    <property type="entry name" value="DEOXYGUANOSINETRIPHOSPHATE TRIPHOSPHOHYDROLASE"/>
    <property type="match status" value="1"/>
</dbReference>
<dbReference type="PANTHER" id="PTHR11373">
    <property type="entry name" value="DEOXYNUCLEOSIDE TRIPHOSPHATE TRIPHOSPHOHYDROLASE"/>
    <property type="match status" value="1"/>
</dbReference>
<dbReference type="Pfam" id="PF01966">
    <property type="entry name" value="HD"/>
    <property type="match status" value="1"/>
</dbReference>
<dbReference type="Pfam" id="PF13286">
    <property type="entry name" value="HD_assoc"/>
    <property type="match status" value="1"/>
</dbReference>
<dbReference type="SMART" id="SM00471">
    <property type="entry name" value="HDc"/>
    <property type="match status" value="1"/>
</dbReference>
<dbReference type="SUPFAM" id="SSF109604">
    <property type="entry name" value="HD-domain/PDEase-like"/>
    <property type="match status" value="1"/>
</dbReference>
<dbReference type="PROSITE" id="PS51831">
    <property type="entry name" value="HD"/>
    <property type="match status" value="1"/>
</dbReference>